<accession>A8YTJ4</accession>
<comment type="function">
    <text evidence="1">Endonuclease that is involved in the suppression of homologous recombination and thus may have a key role in the control of bacterial genetic diversity.</text>
</comment>
<comment type="function">
    <text evidence="1">Acts as a ribosome collision sensor, splitting the ribosome into its 2 subunits. Detects stalled/collided 70S ribosomes which it binds and splits by an ATP-hydrolysis driven conformational change. Acts upstream of the ribosome quality control system (RQC), a ribosome-associated complex that mediates the extraction of incompletely synthesized nascent chains from stalled ribosomes and their subsequent degradation. Probably generates substrates for RQC.</text>
</comment>
<comment type="subunit">
    <text evidence="1">Homodimer. Binds to stalled ribosomes, contacting rRNA.</text>
</comment>
<comment type="similarity">
    <text evidence="1">Belongs to the DNA mismatch repair MutS family. MutS2 subfamily.</text>
</comment>
<protein>
    <recommendedName>
        <fullName evidence="1">Endonuclease MutS2</fullName>
        <ecNumber evidence="1">3.1.-.-</ecNumber>
    </recommendedName>
    <alternativeName>
        <fullName evidence="1">Ribosome-associated protein quality control-upstream factor</fullName>
        <shortName evidence="1">RQC-upstream factor</shortName>
        <shortName evidence="1">RqcU</shortName>
        <ecNumber evidence="1">3.6.4.-</ecNumber>
    </alternativeName>
</protein>
<name>MUTS2_LACH4</name>
<keyword id="KW-0067">ATP-binding</keyword>
<keyword id="KW-0238">DNA-binding</keyword>
<keyword id="KW-0255">Endonuclease</keyword>
<keyword id="KW-0378">Hydrolase</keyword>
<keyword id="KW-0540">Nuclease</keyword>
<keyword id="KW-0547">Nucleotide-binding</keyword>
<keyword id="KW-0694">RNA-binding</keyword>
<keyword id="KW-0699">rRNA-binding</keyword>
<gene>
    <name evidence="1" type="primary">mutS2</name>
    <name evidence="1" type="synonym">rqcU</name>
    <name type="ordered locus">lhv_0442</name>
</gene>
<feature type="chain" id="PRO_1000093365" description="Endonuclease MutS2">
    <location>
        <begin position="1"/>
        <end position="785"/>
    </location>
</feature>
<feature type="domain" description="Smr" evidence="1">
    <location>
        <begin position="710"/>
        <end position="785"/>
    </location>
</feature>
<feature type="binding site" evidence="1">
    <location>
        <begin position="334"/>
        <end position="341"/>
    </location>
    <ligand>
        <name>ATP</name>
        <dbReference type="ChEBI" id="CHEBI:30616"/>
    </ligand>
</feature>
<proteinExistence type="inferred from homology"/>
<reference key="1">
    <citation type="journal article" date="2008" name="J. Bacteriol.">
        <title>Genome sequence of Lactobacillus helveticus: an organism distinguished by selective gene loss and IS element expansion.</title>
        <authorList>
            <person name="Callanan M."/>
            <person name="Kaleta P."/>
            <person name="O'Callaghan J."/>
            <person name="O'Sullivan O."/>
            <person name="Jordan K."/>
            <person name="McAuliffe O."/>
            <person name="Sangrador-Vegas A."/>
            <person name="Slattery L."/>
            <person name="Fitzgerald G.F."/>
            <person name="Beresford T."/>
            <person name="Ross R.P."/>
        </authorList>
    </citation>
    <scope>NUCLEOTIDE SEQUENCE [LARGE SCALE GENOMIC DNA]</scope>
    <source>
        <strain>DPC 4571</strain>
    </source>
</reference>
<dbReference type="EC" id="3.1.-.-" evidence="1"/>
<dbReference type="EC" id="3.6.4.-" evidence="1"/>
<dbReference type="EMBL" id="CP000517">
    <property type="protein sequence ID" value="ABX26650.1"/>
    <property type="molecule type" value="Genomic_DNA"/>
</dbReference>
<dbReference type="RefSeq" id="WP_012211453.1">
    <property type="nucleotide sequence ID" value="NC_010080.1"/>
</dbReference>
<dbReference type="SMR" id="A8YTJ4"/>
<dbReference type="KEGG" id="lhe:lhv_0442"/>
<dbReference type="eggNOG" id="COG1193">
    <property type="taxonomic scope" value="Bacteria"/>
</dbReference>
<dbReference type="HOGENOM" id="CLU_011252_2_1_9"/>
<dbReference type="Proteomes" id="UP000000790">
    <property type="component" value="Chromosome"/>
</dbReference>
<dbReference type="GO" id="GO:0005524">
    <property type="term" value="F:ATP binding"/>
    <property type="evidence" value="ECO:0007669"/>
    <property type="project" value="UniProtKB-UniRule"/>
</dbReference>
<dbReference type="GO" id="GO:0016887">
    <property type="term" value="F:ATP hydrolysis activity"/>
    <property type="evidence" value="ECO:0007669"/>
    <property type="project" value="InterPro"/>
</dbReference>
<dbReference type="GO" id="GO:0140664">
    <property type="term" value="F:ATP-dependent DNA damage sensor activity"/>
    <property type="evidence" value="ECO:0007669"/>
    <property type="project" value="InterPro"/>
</dbReference>
<dbReference type="GO" id="GO:0004519">
    <property type="term" value="F:endonuclease activity"/>
    <property type="evidence" value="ECO:0007669"/>
    <property type="project" value="UniProtKB-UniRule"/>
</dbReference>
<dbReference type="GO" id="GO:0030983">
    <property type="term" value="F:mismatched DNA binding"/>
    <property type="evidence" value="ECO:0007669"/>
    <property type="project" value="InterPro"/>
</dbReference>
<dbReference type="GO" id="GO:0043023">
    <property type="term" value="F:ribosomal large subunit binding"/>
    <property type="evidence" value="ECO:0007669"/>
    <property type="project" value="UniProtKB-UniRule"/>
</dbReference>
<dbReference type="GO" id="GO:0019843">
    <property type="term" value="F:rRNA binding"/>
    <property type="evidence" value="ECO:0007669"/>
    <property type="project" value="UniProtKB-UniRule"/>
</dbReference>
<dbReference type="GO" id="GO:0006298">
    <property type="term" value="P:mismatch repair"/>
    <property type="evidence" value="ECO:0007669"/>
    <property type="project" value="InterPro"/>
</dbReference>
<dbReference type="GO" id="GO:0045910">
    <property type="term" value="P:negative regulation of DNA recombination"/>
    <property type="evidence" value="ECO:0007669"/>
    <property type="project" value="InterPro"/>
</dbReference>
<dbReference type="GO" id="GO:0072344">
    <property type="term" value="P:rescue of stalled ribosome"/>
    <property type="evidence" value="ECO:0007669"/>
    <property type="project" value="UniProtKB-UniRule"/>
</dbReference>
<dbReference type="CDD" id="cd03280">
    <property type="entry name" value="ABC_MutS2"/>
    <property type="match status" value="1"/>
</dbReference>
<dbReference type="FunFam" id="3.40.50.300:FF:000830">
    <property type="entry name" value="Endonuclease MutS2"/>
    <property type="match status" value="1"/>
</dbReference>
<dbReference type="Gene3D" id="3.30.1370.110">
    <property type="match status" value="1"/>
</dbReference>
<dbReference type="Gene3D" id="3.40.50.300">
    <property type="entry name" value="P-loop containing nucleotide triphosphate hydrolases"/>
    <property type="match status" value="1"/>
</dbReference>
<dbReference type="HAMAP" id="MF_00092">
    <property type="entry name" value="MutS2"/>
    <property type="match status" value="1"/>
</dbReference>
<dbReference type="InterPro" id="IPR000432">
    <property type="entry name" value="DNA_mismatch_repair_MutS_C"/>
</dbReference>
<dbReference type="InterPro" id="IPR007696">
    <property type="entry name" value="DNA_mismatch_repair_MutS_core"/>
</dbReference>
<dbReference type="InterPro" id="IPR036187">
    <property type="entry name" value="DNA_mismatch_repair_MutS_sf"/>
</dbReference>
<dbReference type="InterPro" id="IPR046893">
    <property type="entry name" value="MSSS"/>
</dbReference>
<dbReference type="InterPro" id="IPR045076">
    <property type="entry name" value="MutS"/>
</dbReference>
<dbReference type="InterPro" id="IPR005747">
    <property type="entry name" value="MutS2"/>
</dbReference>
<dbReference type="InterPro" id="IPR027417">
    <property type="entry name" value="P-loop_NTPase"/>
</dbReference>
<dbReference type="InterPro" id="IPR002625">
    <property type="entry name" value="Smr_dom"/>
</dbReference>
<dbReference type="InterPro" id="IPR036063">
    <property type="entry name" value="Smr_dom_sf"/>
</dbReference>
<dbReference type="NCBIfam" id="TIGR01069">
    <property type="entry name" value="mutS2"/>
    <property type="match status" value="1"/>
</dbReference>
<dbReference type="PANTHER" id="PTHR48466:SF2">
    <property type="entry name" value="OS10G0509000 PROTEIN"/>
    <property type="match status" value="1"/>
</dbReference>
<dbReference type="PANTHER" id="PTHR48466">
    <property type="entry name" value="OS10G0509000 PROTEIN-RELATED"/>
    <property type="match status" value="1"/>
</dbReference>
<dbReference type="Pfam" id="PF20297">
    <property type="entry name" value="MSSS"/>
    <property type="match status" value="1"/>
</dbReference>
<dbReference type="Pfam" id="PF00488">
    <property type="entry name" value="MutS_V"/>
    <property type="match status" value="1"/>
</dbReference>
<dbReference type="Pfam" id="PF01713">
    <property type="entry name" value="Smr"/>
    <property type="match status" value="1"/>
</dbReference>
<dbReference type="PIRSF" id="PIRSF005814">
    <property type="entry name" value="MutS_YshD"/>
    <property type="match status" value="1"/>
</dbReference>
<dbReference type="SMART" id="SM00534">
    <property type="entry name" value="MUTSac"/>
    <property type="match status" value="1"/>
</dbReference>
<dbReference type="SMART" id="SM00533">
    <property type="entry name" value="MUTSd"/>
    <property type="match status" value="1"/>
</dbReference>
<dbReference type="SMART" id="SM00463">
    <property type="entry name" value="SMR"/>
    <property type="match status" value="1"/>
</dbReference>
<dbReference type="SUPFAM" id="SSF48334">
    <property type="entry name" value="DNA repair protein MutS, domain III"/>
    <property type="match status" value="1"/>
</dbReference>
<dbReference type="SUPFAM" id="SSF52540">
    <property type="entry name" value="P-loop containing nucleoside triphosphate hydrolases"/>
    <property type="match status" value="1"/>
</dbReference>
<dbReference type="SUPFAM" id="SSF160443">
    <property type="entry name" value="SMR domain-like"/>
    <property type="match status" value="1"/>
</dbReference>
<dbReference type="PROSITE" id="PS00486">
    <property type="entry name" value="DNA_MISMATCH_REPAIR_2"/>
    <property type="match status" value="1"/>
</dbReference>
<dbReference type="PROSITE" id="PS50828">
    <property type="entry name" value="SMR"/>
    <property type="match status" value="1"/>
</dbReference>
<sequence length="785" mass="87959">MNDKILKILEFGEITKRLSKLAITAPAKEAALKLRPSSNFDQVQNELKQTLALADLLRVKGRLPLTDFQDVHPSTKRLGVKANLNAQELGNLLLVLSLANEINKFLEDVDDEKLNLSAIDSVLDQLDVPDLLFRELKKSVDYDGEVLDTASNALARLRHDMRSNEEDIKNRMDAYTKGNSSKYLSEQIVTIRDDRYVIPVKQEYRGKFGGVVHDQSASGQTLFIEPEAVLNLNNRQQNLIAQEKQEIRNILKHLSSLAREEINSINNIANSLTRLDFLQAKAKLAKEMKASEPKLTQDHSLELRNARHPLIDPEKVVPNDIRLGGDYDTMLITGPNTGGKTITLKTAGLLQLMAQSGLFIPAEEGSKVGVFKEVYADIGDEQSIEQSLSTFSSHINDIIAIMKNVDKETLVLIDEIGAGTDPEEGASLAISILDFLRKKDAKIMVTTHYPELKLYGYNRPRTINASMEFDLKTLSPTYHLQIGIPGHSNAFAIARRLGMREDVVKNAQNLMADEDSDINKMIAKLNAQTKAATTARNRLETSLDRSQKLEQKLQQALDWYNQRVQKQLDFAQERANEVVAKRRKKADKIIAELEKQKNVGVKENKIIEAKGELNSLERQAHNLAHNKVLQREKRQHHVSVGDQVKVLSYGQTGTITKKLSEHEYEVQIGIIKVKVSDRDIERIAKNNAQPKKKLVRATSAIRRSNAHSELDLRGQRYDEAMTNLDRYIDSALLAGLDIVTIIHGIGTGAIRKGVWQYLRSSNHVKGFNYAPANEGGNGATIVKLK</sequence>
<organism>
    <name type="scientific">Lactobacillus helveticus (strain DPC 4571)</name>
    <dbReference type="NCBI Taxonomy" id="405566"/>
    <lineage>
        <taxon>Bacteria</taxon>
        <taxon>Bacillati</taxon>
        <taxon>Bacillota</taxon>
        <taxon>Bacilli</taxon>
        <taxon>Lactobacillales</taxon>
        <taxon>Lactobacillaceae</taxon>
        <taxon>Lactobacillus</taxon>
    </lineage>
</organism>
<evidence type="ECO:0000255" key="1">
    <source>
        <dbReference type="HAMAP-Rule" id="MF_00092"/>
    </source>
</evidence>